<sequence length="160" mass="18232">MTKKKAHKPGSATIALNKRARHEYFIEEEFEAGLALQGWEVKSLRAGKANIGDSYVILKDGEAWLFGANFTPMAVASTHVVCDPTRTRKLLLNQRELDSLYGRINREGYTVVALSLYWKNAWCKVKIGVAKGKKQHDKRSDLKEREWQLDKARIMKNAGR</sequence>
<evidence type="ECO:0000255" key="1">
    <source>
        <dbReference type="HAMAP-Rule" id="MF_00023"/>
    </source>
</evidence>
<evidence type="ECO:0000305" key="2"/>
<comment type="function">
    <text evidence="1">Required for rescue of stalled ribosomes mediated by trans-translation. Binds to transfer-messenger RNA (tmRNA), required for stable association of tmRNA with ribosomes. tmRNA and SmpB together mimic tRNA shape, replacing the anticodon stem-loop with SmpB. tmRNA is encoded by the ssrA gene; the 2 termini fold to resemble tRNA(Ala) and it encodes a 'tag peptide', a short internal open reading frame. During trans-translation Ala-aminoacylated tmRNA acts like a tRNA, entering the A-site of stalled ribosomes, displacing the stalled mRNA. The ribosome then switches to translate the ORF on the tmRNA; the nascent peptide is terminated with the 'tag peptide' encoded by the tmRNA and targeted for degradation. The ribosome is freed to recommence translation, which seems to be the essential function of trans-translation.</text>
</comment>
<comment type="subcellular location">
    <subcellularLocation>
        <location evidence="1">Cytoplasm</location>
    </subcellularLocation>
    <text evidence="1">The tmRNA-SmpB complex associates with stalled 70S ribosomes.</text>
</comment>
<comment type="similarity">
    <text evidence="1">Belongs to the SmpB family.</text>
</comment>
<comment type="sequence caution" evidence="2">
    <conflict type="erroneous initiation">
        <sequence resource="EMBL-CDS" id="AAX66594"/>
    </conflict>
    <text>Extended N-terminus.</text>
</comment>
<accession>Q57L18</accession>
<feature type="chain" id="PRO_0000331094" description="SsrA-binding protein">
    <location>
        <begin position="1"/>
        <end position="160"/>
    </location>
</feature>
<name>SSRP_SALCH</name>
<dbReference type="EMBL" id="AE017220">
    <property type="protein sequence ID" value="AAX66594.1"/>
    <property type="status" value="ALT_INIT"/>
    <property type="molecule type" value="Genomic_DNA"/>
</dbReference>
<dbReference type="RefSeq" id="WP_001518569.1">
    <property type="nucleotide sequence ID" value="NC_006905.1"/>
</dbReference>
<dbReference type="SMR" id="Q57L18"/>
<dbReference type="GeneID" id="66757102"/>
<dbReference type="KEGG" id="sec:SCH_2688"/>
<dbReference type="HOGENOM" id="CLU_108953_3_0_6"/>
<dbReference type="Proteomes" id="UP000000538">
    <property type="component" value="Chromosome"/>
</dbReference>
<dbReference type="GO" id="GO:0005829">
    <property type="term" value="C:cytosol"/>
    <property type="evidence" value="ECO:0007669"/>
    <property type="project" value="TreeGrafter"/>
</dbReference>
<dbReference type="GO" id="GO:0003723">
    <property type="term" value="F:RNA binding"/>
    <property type="evidence" value="ECO:0007669"/>
    <property type="project" value="UniProtKB-UniRule"/>
</dbReference>
<dbReference type="GO" id="GO:0070929">
    <property type="term" value="P:trans-translation"/>
    <property type="evidence" value="ECO:0007669"/>
    <property type="project" value="UniProtKB-UniRule"/>
</dbReference>
<dbReference type="CDD" id="cd09294">
    <property type="entry name" value="SmpB"/>
    <property type="match status" value="1"/>
</dbReference>
<dbReference type="FunFam" id="2.40.280.10:FF:000001">
    <property type="entry name" value="SsrA-binding protein"/>
    <property type="match status" value="1"/>
</dbReference>
<dbReference type="Gene3D" id="2.40.280.10">
    <property type="match status" value="1"/>
</dbReference>
<dbReference type="HAMAP" id="MF_00023">
    <property type="entry name" value="SmpB"/>
    <property type="match status" value="1"/>
</dbReference>
<dbReference type="InterPro" id="IPR023620">
    <property type="entry name" value="SmpB"/>
</dbReference>
<dbReference type="InterPro" id="IPR000037">
    <property type="entry name" value="SsrA-bd_prot"/>
</dbReference>
<dbReference type="InterPro" id="IPR020081">
    <property type="entry name" value="SsrA-bd_prot_CS"/>
</dbReference>
<dbReference type="NCBIfam" id="NF003843">
    <property type="entry name" value="PRK05422.1"/>
    <property type="match status" value="1"/>
</dbReference>
<dbReference type="NCBIfam" id="TIGR00086">
    <property type="entry name" value="smpB"/>
    <property type="match status" value="1"/>
</dbReference>
<dbReference type="PANTHER" id="PTHR30308:SF2">
    <property type="entry name" value="SSRA-BINDING PROTEIN"/>
    <property type="match status" value="1"/>
</dbReference>
<dbReference type="PANTHER" id="PTHR30308">
    <property type="entry name" value="TMRNA-BINDING COMPONENT OF TRANS-TRANSLATION TAGGING COMPLEX"/>
    <property type="match status" value="1"/>
</dbReference>
<dbReference type="Pfam" id="PF01668">
    <property type="entry name" value="SmpB"/>
    <property type="match status" value="1"/>
</dbReference>
<dbReference type="SUPFAM" id="SSF74982">
    <property type="entry name" value="Small protein B (SmpB)"/>
    <property type="match status" value="1"/>
</dbReference>
<dbReference type="PROSITE" id="PS01317">
    <property type="entry name" value="SSRP"/>
    <property type="match status" value="1"/>
</dbReference>
<gene>
    <name evidence="1" type="primary">smpB</name>
    <name type="ordered locus">SCH_2688</name>
</gene>
<organism>
    <name type="scientific">Salmonella choleraesuis (strain SC-B67)</name>
    <dbReference type="NCBI Taxonomy" id="321314"/>
    <lineage>
        <taxon>Bacteria</taxon>
        <taxon>Pseudomonadati</taxon>
        <taxon>Pseudomonadota</taxon>
        <taxon>Gammaproteobacteria</taxon>
        <taxon>Enterobacterales</taxon>
        <taxon>Enterobacteriaceae</taxon>
        <taxon>Salmonella</taxon>
    </lineage>
</organism>
<proteinExistence type="inferred from homology"/>
<protein>
    <recommendedName>
        <fullName evidence="1">SsrA-binding protein</fullName>
    </recommendedName>
    <alternativeName>
        <fullName evidence="1">Small protein B</fullName>
    </alternativeName>
</protein>
<reference key="1">
    <citation type="journal article" date="2005" name="Nucleic Acids Res.">
        <title>The genome sequence of Salmonella enterica serovar Choleraesuis, a highly invasive and resistant zoonotic pathogen.</title>
        <authorList>
            <person name="Chiu C.-H."/>
            <person name="Tang P."/>
            <person name="Chu C."/>
            <person name="Hu S."/>
            <person name="Bao Q."/>
            <person name="Yu J."/>
            <person name="Chou Y.-Y."/>
            <person name="Wang H.-S."/>
            <person name="Lee Y.-S."/>
        </authorList>
    </citation>
    <scope>NUCLEOTIDE SEQUENCE [LARGE SCALE GENOMIC DNA]</scope>
    <source>
        <strain>SC-B67</strain>
    </source>
</reference>
<keyword id="KW-0963">Cytoplasm</keyword>
<keyword id="KW-0694">RNA-binding</keyword>